<organism>
    <name type="scientific">Rattus norvegicus</name>
    <name type="common">Rat</name>
    <dbReference type="NCBI Taxonomy" id="10116"/>
    <lineage>
        <taxon>Eukaryota</taxon>
        <taxon>Metazoa</taxon>
        <taxon>Chordata</taxon>
        <taxon>Craniata</taxon>
        <taxon>Vertebrata</taxon>
        <taxon>Euteleostomi</taxon>
        <taxon>Mammalia</taxon>
        <taxon>Eutheria</taxon>
        <taxon>Euarchontoglires</taxon>
        <taxon>Glires</taxon>
        <taxon>Rodentia</taxon>
        <taxon>Myomorpha</taxon>
        <taxon>Muroidea</taxon>
        <taxon>Muridae</taxon>
        <taxon>Murinae</taxon>
        <taxon>Rattus</taxon>
    </lineage>
</organism>
<keyword id="KW-0963">Cytoplasm</keyword>
<keyword id="KW-0223">Dioxygenase</keyword>
<keyword id="KW-0349">Heme</keyword>
<keyword id="KW-0391">Immunity</keyword>
<keyword id="KW-0408">Iron</keyword>
<keyword id="KW-0479">Metal-binding</keyword>
<keyword id="KW-0560">Oxidoreductase</keyword>
<keyword id="KW-1185">Reference proteome</keyword>
<keyword id="KW-0823">Tryptophan catabolism</keyword>
<dbReference type="EC" id="1.13.11.52" evidence="1"/>
<dbReference type="EMBL" id="AF312699">
    <property type="protein sequence ID" value="AAG30573.1"/>
    <property type="molecule type" value="mRNA"/>
</dbReference>
<dbReference type="RefSeq" id="NP_076463.1">
    <property type="nucleotide sequence ID" value="NM_023973.1"/>
</dbReference>
<dbReference type="SMR" id="Q9ERD9"/>
<dbReference type="FunCoup" id="Q9ERD9">
    <property type="interactions" value="136"/>
</dbReference>
<dbReference type="STRING" id="10116.ENSRNOP00000050320"/>
<dbReference type="BindingDB" id="Q9ERD9"/>
<dbReference type="ChEMBL" id="CHEMBL4523451"/>
<dbReference type="iPTMnet" id="Q9ERD9"/>
<dbReference type="PhosphoSitePlus" id="Q9ERD9"/>
<dbReference type="PaxDb" id="10116-ENSRNOP00000050320"/>
<dbReference type="GeneID" id="66029"/>
<dbReference type="KEGG" id="rno:66029"/>
<dbReference type="UCSC" id="RGD:619989">
    <property type="organism name" value="rat"/>
</dbReference>
<dbReference type="AGR" id="RGD:619989"/>
<dbReference type="CTD" id="3620"/>
<dbReference type="RGD" id="619989">
    <property type="gene designation" value="Ido1"/>
</dbReference>
<dbReference type="eggNOG" id="ENOG502RZ6X">
    <property type="taxonomic scope" value="Eukaryota"/>
</dbReference>
<dbReference type="InParanoid" id="Q9ERD9"/>
<dbReference type="PhylomeDB" id="Q9ERD9"/>
<dbReference type="BRENDA" id="1.13.11.52">
    <property type="organism ID" value="5301"/>
</dbReference>
<dbReference type="Reactome" id="R-RNO-71240">
    <property type="pathway name" value="Tryptophan catabolism"/>
</dbReference>
<dbReference type="PRO" id="PR:Q9ERD9"/>
<dbReference type="Proteomes" id="UP000002494">
    <property type="component" value="Unplaced"/>
</dbReference>
<dbReference type="GO" id="GO:0005737">
    <property type="term" value="C:cytoplasm"/>
    <property type="evidence" value="ECO:0000266"/>
    <property type="project" value="RGD"/>
</dbReference>
<dbReference type="GO" id="GO:0005829">
    <property type="term" value="C:cytosol"/>
    <property type="evidence" value="ECO:0007669"/>
    <property type="project" value="UniProtKB-SubCell"/>
</dbReference>
<dbReference type="GO" id="GO:0030485">
    <property type="term" value="C:smooth muscle contractile fiber"/>
    <property type="evidence" value="ECO:0000266"/>
    <property type="project" value="RGD"/>
</dbReference>
<dbReference type="GO" id="GO:0032421">
    <property type="term" value="C:stereocilium bundle"/>
    <property type="evidence" value="ECO:0000266"/>
    <property type="project" value="RGD"/>
</dbReference>
<dbReference type="GO" id="GO:0016597">
    <property type="term" value="F:amino acid binding"/>
    <property type="evidence" value="ECO:0000314"/>
    <property type="project" value="RGD"/>
</dbReference>
<dbReference type="GO" id="GO:0020037">
    <property type="term" value="F:heme binding"/>
    <property type="evidence" value="ECO:0007669"/>
    <property type="project" value="InterPro"/>
</dbReference>
<dbReference type="GO" id="GO:0033754">
    <property type="term" value="F:indoleamine 2,3-dioxygenase activity"/>
    <property type="evidence" value="ECO:0000314"/>
    <property type="project" value="RGD"/>
</dbReference>
<dbReference type="GO" id="GO:0046872">
    <property type="term" value="F:metal ion binding"/>
    <property type="evidence" value="ECO:0007669"/>
    <property type="project" value="UniProtKB-KW"/>
</dbReference>
<dbReference type="GO" id="GO:0019825">
    <property type="term" value="F:oxygen binding"/>
    <property type="evidence" value="ECO:0000314"/>
    <property type="project" value="RGD"/>
</dbReference>
<dbReference type="GO" id="GO:0004833">
    <property type="term" value="F:tryptophan 2,3-dioxygenase activity"/>
    <property type="evidence" value="ECO:0000266"/>
    <property type="project" value="RGD"/>
</dbReference>
<dbReference type="GO" id="GO:0034354">
    <property type="term" value="P:'de novo' NAD biosynthetic process from L-tryptophan"/>
    <property type="evidence" value="ECO:0000318"/>
    <property type="project" value="GO_Central"/>
</dbReference>
<dbReference type="GO" id="GO:0006954">
    <property type="term" value="P:inflammatory response"/>
    <property type="evidence" value="ECO:0000266"/>
    <property type="project" value="RGD"/>
</dbReference>
<dbReference type="GO" id="GO:0034276">
    <property type="term" value="P:kynurenic acid biosynthetic process"/>
    <property type="evidence" value="ECO:0000266"/>
    <property type="project" value="RGD"/>
</dbReference>
<dbReference type="GO" id="GO:0019441">
    <property type="term" value="P:L-tryptophan catabolic process to kynurenine"/>
    <property type="evidence" value="ECO:0000314"/>
    <property type="project" value="RGD"/>
</dbReference>
<dbReference type="GO" id="GO:0033555">
    <property type="term" value="P:multicellular organismal response to stress"/>
    <property type="evidence" value="ECO:0000266"/>
    <property type="project" value="RGD"/>
</dbReference>
<dbReference type="GO" id="GO:0046007">
    <property type="term" value="P:negative regulation of activated T cell proliferation"/>
    <property type="evidence" value="ECO:0000266"/>
    <property type="project" value="RGD"/>
</dbReference>
<dbReference type="GO" id="GO:0032693">
    <property type="term" value="P:negative regulation of interleukin-10 production"/>
    <property type="evidence" value="ECO:0000266"/>
    <property type="project" value="RGD"/>
</dbReference>
<dbReference type="GO" id="GO:0070233">
    <property type="term" value="P:negative regulation of T cell apoptotic process"/>
    <property type="evidence" value="ECO:0000266"/>
    <property type="project" value="RGD"/>
</dbReference>
<dbReference type="GO" id="GO:0042130">
    <property type="term" value="P:negative regulation of T cell proliferation"/>
    <property type="evidence" value="ECO:0000266"/>
    <property type="project" value="RGD"/>
</dbReference>
<dbReference type="GO" id="GO:0043065">
    <property type="term" value="P:positive regulation of apoptotic process"/>
    <property type="evidence" value="ECO:0000266"/>
    <property type="project" value="RGD"/>
</dbReference>
<dbReference type="GO" id="GO:0002678">
    <property type="term" value="P:positive regulation of chronic inflammatory response"/>
    <property type="evidence" value="ECO:0000266"/>
    <property type="project" value="RGD"/>
</dbReference>
<dbReference type="GO" id="GO:0032735">
    <property type="term" value="P:positive regulation of interleukin-12 production"/>
    <property type="evidence" value="ECO:0000266"/>
    <property type="project" value="RGD"/>
</dbReference>
<dbReference type="GO" id="GO:0070234">
    <property type="term" value="P:positive regulation of T cell apoptotic process"/>
    <property type="evidence" value="ECO:0000266"/>
    <property type="project" value="RGD"/>
</dbReference>
<dbReference type="GO" id="GO:0002666">
    <property type="term" value="P:positive regulation of T cell tolerance induction"/>
    <property type="evidence" value="ECO:0000266"/>
    <property type="project" value="RGD"/>
</dbReference>
<dbReference type="GO" id="GO:0002830">
    <property type="term" value="P:positive regulation of type 2 immune response"/>
    <property type="evidence" value="ECO:0000266"/>
    <property type="project" value="RGD"/>
</dbReference>
<dbReference type="GO" id="GO:0019805">
    <property type="term" value="P:quinolinate biosynthetic process"/>
    <property type="evidence" value="ECO:0000266"/>
    <property type="project" value="RGD"/>
</dbReference>
<dbReference type="GO" id="GO:0032496">
    <property type="term" value="P:response to lipopolysaccharide"/>
    <property type="evidence" value="ECO:0000266"/>
    <property type="project" value="RGD"/>
</dbReference>
<dbReference type="GO" id="GO:0036269">
    <property type="term" value="P:swimming behavior"/>
    <property type="evidence" value="ECO:0000266"/>
    <property type="project" value="RGD"/>
</dbReference>
<dbReference type="GO" id="GO:0042098">
    <property type="term" value="P:T cell proliferation"/>
    <property type="evidence" value="ECO:0000266"/>
    <property type="project" value="RGD"/>
</dbReference>
<dbReference type="FunFam" id="1.20.58.480:FF:000003">
    <property type="entry name" value="Indoleamine 2,3-dioxygenase 1"/>
    <property type="match status" value="1"/>
</dbReference>
<dbReference type="Gene3D" id="1.20.58.480">
    <property type="match status" value="1"/>
</dbReference>
<dbReference type="InterPro" id="IPR000898">
    <property type="entry name" value="Indolamine_dOase"/>
</dbReference>
<dbReference type="InterPro" id="IPR037217">
    <property type="entry name" value="Trp/Indoleamine_2_3_dOase-like"/>
</dbReference>
<dbReference type="PANTHER" id="PTHR28657">
    <property type="entry name" value="INDOLEAMINE 2,3-DIOXYGENASE"/>
    <property type="match status" value="1"/>
</dbReference>
<dbReference type="PANTHER" id="PTHR28657:SF2">
    <property type="entry name" value="INDOLEAMINE 2,3-DIOXYGENASE 1"/>
    <property type="match status" value="1"/>
</dbReference>
<dbReference type="Pfam" id="PF01231">
    <property type="entry name" value="IDO"/>
    <property type="match status" value="1"/>
</dbReference>
<dbReference type="SUPFAM" id="SSF140959">
    <property type="entry name" value="Indolic compounds 2,3-dioxygenase-like"/>
    <property type="match status" value="1"/>
</dbReference>
<dbReference type="PROSITE" id="PS00876">
    <property type="entry name" value="IDO_1"/>
    <property type="match status" value="1"/>
</dbReference>
<dbReference type="PROSITE" id="PS00877">
    <property type="entry name" value="IDO_2"/>
    <property type="match status" value="1"/>
</dbReference>
<name>I23O1_RAT</name>
<reference key="1">
    <citation type="submission" date="2000-10" db="EMBL/GenBank/DDBJ databases">
        <title>Cloning of rat indoleamine 2,3-dioxygenase mRNA.</title>
        <authorList>
            <person name="Miki T."/>
            <person name="Stella A."/>
            <person name="Robbins P.D."/>
            <person name="Valdivia L.A."/>
            <person name="Gambotto A."/>
        </authorList>
    </citation>
    <scope>NUCLEOTIDE SEQUENCE [MRNA]</scope>
    <source>
        <strain>Lewis</strain>
        <tissue>Spleen</tissue>
    </source>
</reference>
<protein>
    <recommendedName>
        <fullName>Indoleamine 2,3-dioxygenase 1</fullName>
        <shortName>IDO-1</shortName>
        <ecNumber evidence="1">1.13.11.52</ecNumber>
    </recommendedName>
    <alternativeName>
        <fullName>Indoleamine-pyrrole 2,3-dioxygenase</fullName>
    </alternativeName>
</protein>
<sequence length="407" mass="45831">MPHSQISPAEGSRRILEEYHIDEDVGFALPHPLEELPDTYRPWILVARNLPKLIENGKLREEVEKLPTLRTEELRGHRLQRLAHLALGYITMAYVWNRGDDDIRKVLPRNLAVPYCELSEKLGLPPILSYADCVLANWKKKDPNGPMTYENMDILFSFPGGDCDKGFFLVSLMVEIAASPAIKAIPTVSSAVEHQDPKALEKALCSIAASLEKAKEIFKRMRDFVDPDTFFHVLRIYLSGWKGNPKLPEGLLYEGVWDTPKKFSGGSAGQSSIFQSLDVLLGIKHDVGEGSAAEFLQEMREYMPPAHRNFLSSLESAPPVREFVILRRNEDLKEAYNECVNGLVSLRMFHLSIVDTYIVKPSKQKPMGGHKSEEPSNTENRGTGGTDVMNFLRSVKDTTKKALLSWP</sequence>
<comment type="function">
    <text evidence="1">Catalyzes the first and rate limiting step of the catabolism of the essential amino acid tryptophan along the kynurenine pathway. Involved in the peripheral immune tolerance, contributing to maintain homeostasis by preventing autoimmunity or immunopathology that would result from uncontrolled and overreacting immune responses. Tryptophan shortage inhibits T lymphocytes division and accumulation of tryptophan catabolites induces T-cell apoptosis and differentiation of regulatory T-cells. Acts as a suppressor of anti-tumor immunity. Limits the growth of intracellular pathogens by depriving tryptophan. Protects the fetus from maternal immune rejection.</text>
</comment>
<comment type="catalytic activity">
    <reaction evidence="1">
        <text>D-tryptophan + O2 = N-formyl-D-kynurenine</text>
        <dbReference type="Rhea" id="RHEA:14189"/>
        <dbReference type="ChEBI" id="CHEBI:15379"/>
        <dbReference type="ChEBI" id="CHEBI:57719"/>
        <dbReference type="ChEBI" id="CHEBI:60051"/>
        <dbReference type="EC" id="1.13.11.52"/>
    </reaction>
</comment>
<comment type="catalytic activity">
    <reaction evidence="1">
        <text>L-tryptophan + O2 = N-formyl-L-kynurenine</text>
        <dbReference type="Rhea" id="RHEA:24536"/>
        <dbReference type="ChEBI" id="CHEBI:15379"/>
        <dbReference type="ChEBI" id="CHEBI:57912"/>
        <dbReference type="ChEBI" id="CHEBI:58629"/>
        <dbReference type="EC" id="1.13.11.52"/>
    </reaction>
</comment>
<comment type="cofactor">
    <cofactor>
        <name>heme b</name>
        <dbReference type="ChEBI" id="CHEBI:60344"/>
    </cofactor>
    <text evidence="1">Binds 1 heme group per subunit.</text>
</comment>
<comment type="activity regulation">
    <text evidence="1">Activity is inhibited by and MTH-trp (methylthiohydantoin-DL-tryptophan), modestly inhibited by L-1MT (1-methyl-L-tryptophan) but not D-1MT (1-methyl-D-tryptophan).</text>
</comment>
<comment type="subunit">
    <text evidence="1">Monomer.</text>
</comment>
<comment type="subcellular location">
    <subcellularLocation>
        <location evidence="2">Cytoplasm</location>
        <location evidence="2">Cytosol</location>
    </subcellularLocation>
</comment>
<comment type="induction">
    <text evidence="1">By IFNG/IFN-gamma in most cells.</text>
</comment>
<comment type="miscellaneous">
    <text evidence="1">Ido1 and Ido2 are 2 distinct enzymes which catalyze the same reaction. Ido2 affinity for tryptophan is much lower than that of Ido1. Ido2 may play a role as a negative regulator of Ido1 by competing for heme-binding with Ido1. Low efficiency Ido2 enzymes have been conserved throughout vertebrate evolution, whereas higher efficiency Ido1 enzymes are dispensable in many lower vertebrate lineages. Ido1 may have arisen by gene duplication of a more ancient proto-IDO gene before the divergence of marsupial and eutherian (placental) mammals.</text>
</comment>
<comment type="similarity">
    <text evidence="4">Belongs to the indoleamine 2,3-dioxygenase family.</text>
</comment>
<accession>Q9ERD9</accession>
<proteinExistence type="evidence at transcript level"/>
<evidence type="ECO:0000250" key="1">
    <source>
        <dbReference type="UniProtKB" id="P14902"/>
    </source>
</evidence>
<evidence type="ECO:0000250" key="2">
    <source>
        <dbReference type="UniProtKB" id="P28776"/>
    </source>
</evidence>
<evidence type="ECO:0000256" key="3">
    <source>
        <dbReference type="SAM" id="MobiDB-lite"/>
    </source>
</evidence>
<evidence type="ECO:0000305" key="4"/>
<evidence type="ECO:0000312" key="5">
    <source>
        <dbReference type="RGD" id="619989"/>
    </source>
</evidence>
<gene>
    <name evidence="5" type="primary">Ido1</name>
    <name type="synonym">Ido</name>
    <name type="synonym">Indo</name>
</gene>
<feature type="chain" id="PRO_0000285261" description="Indoleamine 2,3-dioxygenase 1">
    <location>
        <begin position="1"/>
        <end position="407"/>
    </location>
</feature>
<feature type="region of interest" description="Disordered" evidence="3">
    <location>
        <begin position="362"/>
        <end position="388"/>
    </location>
</feature>
<feature type="binding site" description="proximal binding residue" evidence="1">
    <location>
        <position position="350"/>
    </location>
    <ligand>
        <name>heme b</name>
        <dbReference type="ChEBI" id="CHEBI:60344"/>
    </ligand>
    <ligandPart>
        <name>Fe</name>
        <dbReference type="ChEBI" id="CHEBI:18248"/>
    </ligandPart>
</feature>